<gene>
    <name type="primary">XYN6</name>
</gene>
<feature type="signal peptide" evidence="2">
    <location>
        <begin position="1"/>
        <end position="16"/>
    </location>
</feature>
<feature type="chain" id="PRO_0000393173" description="Endo-1,4-beta-xylanase 6">
    <location>
        <begin position="17"/>
        <end position="211"/>
    </location>
</feature>
<feature type="domain" description="GH11" evidence="3">
    <location>
        <begin position="19"/>
        <end position="210"/>
    </location>
</feature>
<feature type="active site" description="Nucleophile" evidence="4">
    <location>
        <position position="106"/>
    </location>
</feature>
<feature type="active site" description="Proton donor" evidence="5">
    <location>
        <position position="197"/>
    </location>
</feature>
<name>XYN6_ASPNG</name>
<keyword id="KW-0119">Carbohydrate metabolism</keyword>
<keyword id="KW-0326">Glycosidase</keyword>
<keyword id="KW-0378">Hydrolase</keyword>
<keyword id="KW-0624">Polysaccharide degradation</keyword>
<keyword id="KW-0964">Secreted</keyword>
<keyword id="KW-0732">Signal</keyword>
<keyword id="KW-0858">Xylan degradation</keyword>
<evidence type="ECO:0000250" key="1"/>
<evidence type="ECO:0000255" key="2"/>
<evidence type="ECO:0000255" key="3">
    <source>
        <dbReference type="PROSITE-ProRule" id="PRU01097"/>
    </source>
</evidence>
<evidence type="ECO:0000255" key="4">
    <source>
        <dbReference type="PROSITE-ProRule" id="PRU10062"/>
    </source>
</evidence>
<evidence type="ECO:0000255" key="5">
    <source>
        <dbReference type="PROSITE-ProRule" id="PRU10063"/>
    </source>
</evidence>
<evidence type="ECO:0000269" key="6">
    <source ref="1"/>
</evidence>
<evidence type="ECO:0000305" key="7"/>
<dbReference type="EC" id="3.2.1.8"/>
<dbReference type="EMBL" id="AY536638">
    <property type="protein sequence ID" value="AAS46913.1"/>
    <property type="molecule type" value="mRNA"/>
</dbReference>
<dbReference type="SMR" id="Q6QJ75"/>
<dbReference type="CAZy" id="GH11">
    <property type="family name" value="Glycoside Hydrolase Family 11"/>
</dbReference>
<dbReference type="VEuPathDB" id="FungiDB:An14g07390"/>
<dbReference type="VEuPathDB" id="FungiDB:ASPNIDRAFT2_1101058"/>
<dbReference type="VEuPathDB" id="FungiDB:ATCC64974_22790"/>
<dbReference type="VEuPathDB" id="FungiDB:M747DRAFT_300402"/>
<dbReference type="UniPathway" id="UPA00114"/>
<dbReference type="GO" id="GO:0005576">
    <property type="term" value="C:extracellular region"/>
    <property type="evidence" value="ECO:0000314"/>
    <property type="project" value="UniProtKB"/>
</dbReference>
<dbReference type="GO" id="GO:0031176">
    <property type="term" value="F:endo-1,4-beta-xylanase activity"/>
    <property type="evidence" value="ECO:0000314"/>
    <property type="project" value="UniProtKB"/>
</dbReference>
<dbReference type="GO" id="GO:0045493">
    <property type="term" value="P:xylan catabolic process"/>
    <property type="evidence" value="ECO:0000314"/>
    <property type="project" value="UniProtKB"/>
</dbReference>
<dbReference type="FunFam" id="2.60.120.180:FF:000002">
    <property type="entry name" value="Endo-1,4-beta-xylanase A"/>
    <property type="match status" value="1"/>
</dbReference>
<dbReference type="Gene3D" id="2.60.120.180">
    <property type="match status" value="1"/>
</dbReference>
<dbReference type="InterPro" id="IPR013320">
    <property type="entry name" value="ConA-like_dom_sf"/>
</dbReference>
<dbReference type="InterPro" id="IPR013319">
    <property type="entry name" value="GH11/12"/>
</dbReference>
<dbReference type="InterPro" id="IPR018208">
    <property type="entry name" value="GH11_AS_1"/>
</dbReference>
<dbReference type="InterPro" id="IPR033119">
    <property type="entry name" value="GH11_AS_2"/>
</dbReference>
<dbReference type="InterPro" id="IPR033123">
    <property type="entry name" value="GH11_dom"/>
</dbReference>
<dbReference type="InterPro" id="IPR001137">
    <property type="entry name" value="Glyco_hydro_11"/>
</dbReference>
<dbReference type="PANTHER" id="PTHR46828">
    <property type="entry name" value="ENDO-1,4-BETA-XYLANASE A-RELATED"/>
    <property type="match status" value="1"/>
</dbReference>
<dbReference type="PANTHER" id="PTHR46828:SF2">
    <property type="entry name" value="ENDO-1,4-BETA-XYLANASE A-RELATED"/>
    <property type="match status" value="1"/>
</dbReference>
<dbReference type="Pfam" id="PF00457">
    <property type="entry name" value="Glyco_hydro_11"/>
    <property type="match status" value="1"/>
</dbReference>
<dbReference type="PRINTS" id="PR00911">
    <property type="entry name" value="GLHYDRLASE11"/>
</dbReference>
<dbReference type="SUPFAM" id="SSF49899">
    <property type="entry name" value="Concanavalin A-like lectins/glucanases"/>
    <property type="match status" value="1"/>
</dbReference>
<dbReference type="PROSITE" id="PS00776">
    <property type="entry name" value="GH11_1"/>
    <property type="match status" value="1"/>
</dbReference>
<dbReference type="PROSITE" id="PS00777">
    <property type="entry name" value="GH11_2"/>
    <property type="match status" value="1"/>
</dbReference>
<dbReference type="PROSITE" id="PS51761">
    <property type="entry name" value="GH11_3"/>
    <property type="match status" value="1"/>
</dbReference>
<organism>
    <name type="scientific">Aspergillus niger</name>
    <dbReference type="NCBI Taxonomy" id="5061"/>
    <lineage>
        <taxon>Eukaryota</taxon>
        <taxon>Fungi</taxon>
        <taxon>Dikarya</taxon>
        <taxon>Ascomycota</taxon>
        <taxon>Pezizomycotina</taxon>
        <taxon>Eurotiomycetes</taxon>
        <taxon>Eurotiomycetidae</taxon>
        <taxon>Eurotiales</taxon>
        <taxon>Aspergillaceae</taxon>
        <taxon>Aspergillus</taxon>
        <taxon>Aspergillus subgen. Circumdati</taxon>
    </lineage>
</organism>
<reference key="1">
    <citation type="journal article" date="2006" name="Enzyme Microb. Technol.">
        <title>Efficient expression and secretion of two co-produced xylanases from Aspergillus niger in Pichia pastoris directed by their native signal peptides and the Saccharomyces cerevisiae a-mating factor.</title>
        <authorList>
            <person name="Korona B."/>
            <person name="Korona D."/>
            <person name="Bielecki S."/>
        </authorList>
    </citation>
    <scope>NUCLEOTIDE SEQUENCE [MRNA]</scope>
    <scope>SUBCELLULAR LOCATION</scope>
    <scope>FUNCTION</scope>
    <scope>BIOPHYSICOCHEMICAL PROPERTIES</scope>
    <source>
        <strain>IBT-90</strain>
    </source>
</reference>
<sequence length="211" mass="22561">MKVTAAFAGLLVTALAAPAPEPVLVSRSAGINYVQNYNGNLGDFTYDESAGTFSMYWEDGVSSDFVVGLGWTTGSSNPITYSADYSASGSSSYLAVYGWDNYPQAEYYIVEDYGDYNPCSSATSLGTVYSDGSTYQVCTDTRTNEPSITGTSTFTQYFSVRESTRTSGTVTVANHFNFWAQHGFGNSDFNYQVVAVEAWSGAGSASVTISS</sequence>
<protein>
    <recommendedName>
        <fullName>Endo-1,4-beta-xylanase 6</fullName>
        <shortName>Xylanase 6</shortName>
        <ecNumber>3.2.1.8</ecNumber>
    </recommendedName>
    <alternativeName>
        <fullName>1,4-beta-D-xylan xylanohydrolase 6</fullName>
    </alternativeName>
</protein>
<proteinExistence type="evidence at protein level"/>
<accession>Q6QJ75</accession>
<comment type="function">
    <text evidence="1 6">Endo-1,4-beta-xylanase involved in the hydrolysis of xylan, a major structural heterogeneous polysaccharide found in plant biomass representing the second most abundant polysaccharide in the biosphere, after cellulose.</text>
</comment>
<comment type="catalytic activity">
    <reaction>
        <text>Endohydrolysis of (1-&gt;4)-beta-D-xylosidic linkages in xylans.</text>
        <dbReference type="EC" id="3.2.1.8"/>
    </reaction>
</comment>
<comment type="biophysicochemical properties">
    <phDependence>
        <text evidence="6">Optimum pH is 3.5.</text>
    </phDependence>
</comment>
<comment type="pathway">
    <text>Glycan degradation; xylan degradation.</text>
</comment>
<comment type="subcellular location">
    <subcellularLocation>
        <location evidence="1">Secreted</location>
    </subcellularLocation>
</comment>
<comment type="similarity">
    <text evidence="7">Belongs to the glycosyl hydrolase 11 (cellulase G) family.</text>
</comment>